<feature type="chain" id="PRO_0000295314" description="Lysophospholipase NTE1">
    <location>
        <begin position="1"/>
        <end position="1386"/>
    </location>
</feature>
<feature type="topological domain" description="Cytoplasmic" evidence="1">
    <location>
        <begin position="1"/>
        <end position="19"/>
    </location>
</feature>
<feature type="transmembrane region" description="Helical" evidence="2">
    <location>
        <begin position="20"/>
        <end position="40"/>
    </location>
</feature>
<feature type="topological domain" description="Lumenal" evidence="1">
    <location>
        <begin position="41"/>
        <end position="65"/>
    </location>
</feature>
<feature type="transmembrane region" description="Helical" evidence="2">
    <location>
        <begin position="66"/>
        <end position="86"/>
    </location>
</feature>
<feature type="topological domain" description="Cytoplasmic" evidence="1">
    <location>
        <begin position="87"/>
        <end position="1386"/>
    </location>
</feature>
<feature type="domain" description="PNPLA" evidence="3">
    <location>
        <begin position="1081"/>
        <end position="1245"/>
    </location>
</feature>
<feature type="region of interest" description="Disordered" evidence="4">
    <location>
        <begin position="394"/>
        <end position="416"/>
    </location>
</feature>
<feature type="short sequence motif" description="GXGXXG" evidence="3">
    <location>
        <begin position="1085"/>
        <end position="1090"/>
    </location>
</feature>
<feature type="short sequence motif" description="GXSXG" evidence="3">
    <location>
        <begin position="1112"/>
        <end position="1116"/>
    </location>
</feature>
<feature type="short sequence motif" description="DGA/G" evidence="3">
    <location>
        <begin position="1232"/>
        <end position="1234"/>
    </location>
</feature>
<feature type="compositionally biased region" description="Basic residues" evidence="4">
    <location>
        <begin position="402"/>
        <end position="411"/>
    </location>
</feature>
<feature type="active site" description="Nucleophile" evidence="3">
    <location>
        <position position="1114"/>
    </location>
</feature>
<feature type="active site" description="Proton acceptor" evidence="3">
    <location>
        <position position="1232"/>
    </location>
</feature>
<feature type="binding site">
    <location>
        <begin position="577"/>
        <end position="701"/>
    </location>
    <ligand>
        <name>a nucleoside 3',5'-cyclic phosphate</name>
        <dbReference type="ChEBI" id="CHEBI:58464"/>
        <label>1</label>
    </ligand>
</feature>
<feature type="binding site">
    <location>
        <begin position="697"/>
        <end position="821"/>
    </location>
    <ligand>
        <name>a nucleoside 3',5'-cyclic phosphate</name>
        <dbReference type="ChEBI" id="CHEBI:58464"/>
        <label>2</label>
    </ligand>
</feature>
<accession>Q5A368</accession>
<accession>A0A1D8PTQ9</accession>
<protein>
    <recommendedName>
        <fullName>Lysophospholipase NTE1</fullName>
        <ecNumber>3.1.1.5</ecNumber>
    </recommendedName>
    <alternativeName>
        <fullName>Intracellular phospholipase B</fullName>
    </alternativeName>
    <alternativeName>
        <fullName>Neuropathy target esterase homolog</fullName>
    </alternativeName>
</protein>
<sequence>MGPEFEDSIPLVHSDNRTTTIYSVYIIISDIFSFVQWLLFKVLNLIIIDSPAFVLRLLSKNFEINLHLSSILATLIGVSVVTYLVIRYKFLTGYSHSNDQKEGAGKKGIHPASSKVFVGKSKQDKKPSNYLDEFLLAIKVFGYLDKAVFHELTKSMTTQKLSHEEILCLDESLGFSIVVEGVAQVYTKKSKENSSKYKQRYFEEIEEERDEFLILGDKQYQLLNEVKSGAPLSSLFSTLDLFRPRNKNEEMALTPNDEDGNSVVALNMDYLSKSEPATDSKLSNSDDDENGQDYPEIIVRPKKSHNNGTITIAIIPHTAFERVQSKYPKATSHIVTMVLTRLYKVTMSTVQNYLGLTSEILKSEIKLNEENATSLPRYFVDGLLERLNKKEEAEAEAENLPKKLKHHHRNQLQRTTSRYVSLDSKVKSNHPGDLLSSVPISRSEFQKKVLPKSSTTSLSDGDNKRMNFTDEMEETEENSLRVAIIENIFKMVGIEETNGIVERTGYFQSLSSSTSSSIVGLDSLNQSIMSGATTPTTKRSHPVFNNQGSLMNTINLAELRKPSTAENSTLPKLSGKKRLLSDMNIKDAFAKSLEIKYIGPDSTIVSQNSAITGLYYVIDGSLEIYNRSADVSAPNRYIYTVESGGIAGYLTSVVGFRSMVTIKTPKKTGAVVAYIPKNDYNKLLDKYYFLQLPVALKLKNLLSKQILTIDYALEWCHIPAGEVLCSQGDLANGFHVVLSGRFRVVRSTNKNTEKEDVEVLGEYGHGESIGEVEVLTASRRSNTLIAVRDSETARIPRSLFEMLSNENPSIMVSVSRLVASKVLASQYQPRERNFITSTTSQESFTSANYKTITILPTVSGLPVRQFAEKLVQALRQIGRNVIALDQASILTHLGRHAFDESLARLKLSGYFAYLEEEYETIVYICDTPVQSNWTSTCISQGDCILLLADAEDDSTTIGEYEQLLVKLKTTARTDLCLLHQDKVVRAGSTSPWLKNRIWVQGHHHIQMKFEQGANVLPHKKSFISDLAAKLSQNKAIKSTFEATKQHIKWYVKENDQSKVLKIYKDDFMRLARILSNEAVGLVLGGGGSRGISHVGVVTSLERHGIPVDIIGGTSIGSFVGGLYAKEYNIVSIYAMAKKFSKRISSVWRMLFDLTYPVTSYITGYEFNRGIWKVFGFAEIEDFWIKYFCNSANITNSTMDIHEKGYAWRFIRASMSLAGLLPPIAFNGCMLLDGGYLDNLPVNEMKKRGVKHIIAVDVGSVDDRTPMNYGDTLSGFWVLLNRWNPFSSHPNIPTMMDIQMRLTYVSSVNALEEAKRTPGVYYLRPPIDPYATLDFGKFDEIYKVGLKYADDLFADWKSKGKFPRIAGLVEKKKDGEEKKILYRRNSI</sequence>
<evidence type="ECO:0000250" key="1"/>
<evidence type="ECO:0000255" key="2"/>
<evidence type="ECO:0000255" key="3">
    <source>
        <dbReference type="PROSITE-ProRule" id="PRU01161"/>
    </source>
</evidence>
<evidence type="ECO:0000256" key="4">
    <source>
        <dbReference type="SAM" id="MobiDB-lite"/>
    </source>
</evidence>
<evidence type="ECO:0000305" key="5"/>
<keyword id="KW-0256">Endoplasmic reticulum</keyword>
<keyword id="KW-0378">Hydrolase</keyword>
<keyword id="KW-0442">Lipid degradation</keyword>
<keyword id="KW-0443">Lipid metabolism</keyword>
<keyword id="KW-0472">Membrane</keyword>
<keyword id="KW-1185">Reference proteome</keyword>
<keyword id="KW-0677">Repeat</keyword>
<keyword id="KW-0812">Transmembrane</keyword>
<keyword id="KW-1133">Transmembrane helix</keyword>
<reference key="1">
    <citation type="journal article" date="2004" name="Proc. Natl. Acad. Sci. U.S.A.">
        <title>The diploid genome sequence of Candida albicans.</title>
        <authorList>
            <person name="Jones T."/>
            <person name="Federspiel N.A."/>
            <person name="Chibana H."/>
            <person name="Dungan J."/>
            <person name="Kalman S."/>
            <person name="Magee B.B."/>
            <person name="Newport G."/>
            <person name="Thorstenson Y.R."/>
            <person name="Agabian N."/>
            <person name="Magee P.T."/>
            <person name="Davis R.W."/>
            <person name="Scherer S."/>
        </authorList>
    </citation>
    <scope>NUCLEOTIDE SEQUENCE [LARGE SCALE GENOMIC DNA]</scope>
    <source>
        <strain>SC5314 / ATCC MYA-2876</strain>
    </source>
</reference>
<reference key="2">
    <citation type="journal article" date="2007" name="Genome Biol.">
        <title>Assembly of the Candida albicans genome into sixteen supercontigs aligned on the eight chromosomes.</title>
        <authorList>
            <person name="van het Hoog M."/>
            <person name="Rast T.J."/>
            <person name="Martchenko M."/>
            <person name="Grindle S."/>
            <person name="Dignard D."/>
            <person name="Hogues H."/>
            <person name="Cuomo C."/>
            <person name="Berriman M."/>
            <person name="Scherer S."/>
            <person name="Magee B.B."/>
            <person name="Whiteway M."/>
            <person name="Chibana H."/>
            <person name="Nantel A."/>
            <person name="Magee P.T."/>
        </authorList>
    </citation>
    <scope>GENOME REANNOTATION</scope>
    <source>
        <strain>SC5314 / ATCC MYA-2876</strain>
    </source>
</reference>
<reference key="3">
    <citation type="journal article" date="2013" name="Genome Biol.">
        <title>Assembly of a phased diploid Candida albicans genome facilitates allele-specific measurements and provides a simple model for repeat and indel structure.</title>
        <authorList>
            <person name="Muzzey D."/>
            <person name="Schwartz K."/>
            <person name="Weissman J.S."/>
            <person name="Sherlock G."/>
        </authorList>
    </citation>
    <scope>NUCLEOTIDE SEQUENCE [LARGE SCALE GENOMIC DNA]</scope>
    <scope>GENOME REANNOTATION</scope>
    <source>
        <strain>SC5314 / ATCC MYA-2876</strain>
    </source>
</reference>
<name>NTE1_CANAL</name>
<proteinExistence type="inferred from homology"/>
<gene>
    <name type="primary">NTE1</name>
    <name type="ordered locus">CAALFM_CR08300CA</name>
    <name type="ORF">CaO19.13754</name>
    <name type="ORF">CaO19.6396</name>
</gene>
<dbReference type="EC" id="3.1.1.5"/>
<dbReference type="EMBL" id="CP017630">
    <property type="protein sequence ID" value="AOW31511.1"/>
    <property type="molecule type" value="Genomic_DNA"/>
</dbReference>
<dbReference type="RefSeq" id="XP_716236.1">
    <property type="nucleotide sequence ID" value="XM_711143.2"/>
</dbReference>
<dbReference type="SMR" id="Q5A368"/>
<dbReference type="BioGRID" id="1225170">
    <property type="interactions" value="1"/>
</dbReference>
<dbReference type="FunCoup" id="Q5A368">
    <property type="interactions" value="123"/>
</dbReference>
<dbReference type="STRING" id="237561.Q5A368"/>
<dbReference type="EnsemblFungi" id="CR_08300C_A-T">
    <property type="protein sequence ID" value="CR_08300C_A-T-p1"/>
    <property type="gene ID" value="CR_08300C_A"/>
</dbReference>
<dbReference type="GeneID" id="3642076"/>
<dbReference type="KEGG" id="cal:CAALFM_CR08300CA"/>
<dbReference type="CGD" id="CAL0000194621">
    <property type="gene designation" value="orf19.13754"/>
</dbReference>
<dbReference type="VEuPathDB" id="FungiDB:CR_08300C_A"/>
<dbReference type="eggNOG" id="KOG2968">
    <property type="taxonomic scope" value="Eukaryota"/>
</dbReference>
<dbReference type="HOGENOM" id="CLU_000960_1_1_1"/>
<dbReference type="InParanoid" id="Q5A368"/>
<dbReference type="OMA" id="SSGYVWR"/>
<dbReference type="OrthoDB" id="421051at2759"/>
<dbReference type="PRO" id="PR:Q5A368"/>
<dbReference type="Proteomes" id="UP000000559">
    <property type="component" value="Chromosome R"/>
</dbReference>
<dbReference type="GO" id="GO:0005783">
    <property type="term" value="C:endoplasmic reticulum"/>
    <property type="evidence" value="ECO:0000318"/>
    <property type="project" value="GO_Central"/>
</dbReference>
<dbReference type="GO" id="GO:0005789">
    <property type="term" value="C:endoplasmic reticulum membrane"/>
    <property type="evidence" value="ECO:0007669"/>
    <property type="project" value="UniProtKB-SubCell"/>
</dbReference>
<dbReference type="GO" id="GO:0004622">
    <property type="term" value="F:lysophospholipase activity"/>
    <property type="evidence" value="ECO:0000318"/>
    <property type="project" value="GO_Central"/>
</dbReference>
<dbReference type="GO" id="GO:0046486">
    <property type="term" value="P:glycerolipid metabolic process"/>
    <property type="evidence" value="ECO:0007669"/>
    <property type="project" value="UniProtKB-ARBA"/>
</dbReference>
<dbReference type="GO" id="GO:0016042">
    <property type="term" value="P:lipid catabolic process"/>
    <property type="evidence" value="ECO:0007669"/>
    <property type="project" value="UniProtKB-KW"/>
</dbReference>
<dbReference type="CDD" id="cd00038">
    <property type="entry name" value="CAP_ED"/>
    <property type="match status" value="2"/>
</dbReference>
<dbReference type="FunFam" id="3.40.1090.10:FF:000013">
    <property type="entry name" value="Lysophospholipase NTE1"/>
    <property type="match status" value="1"/>
</dbReference>
<dbReference type="Gene3D" id="3.40.1090.10">
    <property type="entry name" value="Cytosolic phospholipase A2 catalytic domain"/>
    <property type="match status" value="2"/>
</dbReference>
<dbReference type="Gene3D" id="2.60.120.10">
    <property type="entry name" value="Jelly Rolls"/>
    <property type="match status" value="2"/>
</dbReference>
<dbReference type="InterPro" id="IPR016035">
    <property type="entry name" value="Acyl_Trfase/lysoPLipase"/>
</dbReference>
<dbReference type="InterPro" id="IPR000595">
    <property type="entry name" value="cNMP-bd_dom"/>
</dbReference>
<dbReference type="InterPro" id="IPR018490">
    <property type="entry name" value="cNMP-bd_dom_sf"/>
</dbReference>
<dbReference type="InterPro" id="IPR050301">
    <property type="entry name" value="NTE"/>
</dbReference>
<dbReference type="InterPro" id="IPR056556">
    <property type="entry name" value="NTE1_P-loop_dom"/>
</dbReference>
<dbReference type="InterPro" id="IPR002641">
    <property type="entry name" value="PNPLA_dom"/>
</dbReference>
<dbReference type="InterPro" id="IPR014710">
    <property type="entry name" value="RmlC-like_jellyroll"/>
</dbReference>
<dbReference type="PANTHER" id="PTHR14226:SF29">
    <property type="entry name" value="NEUROPATHY TARGET ESTERASE SWS"/>
    <property type="match status" value="1"/>
</dbReference>
<dbReference type="PANTHER" id="PTHR14226">
    <property type="entry name" value="NEUROPATHY TARGET ESTERASE/SWISS CHEESE D.MELANOGASTER"/>
    <property type="match status" value="1"/>
</dbReference>
<dbReference type="Pfam" id="PF00027">
    <property type="entry name" value="cNMP_binding"/>
    <property type="match status" value="1"/>
</dbReference>
<dbReference type="Pfam" id="PF24179">
    <property type="entry name" value="NTE_Ploop"/>
    <property type="match status" value="1"/>
</dbReference>
<dbReference type="Pfam" id="PF01734">
    <property type="entry name" value="Patatin"/>
    <property type="match status" value="1"/>
</dbReference>
<dbReference type="SMART" id="SM00100">
    <property type="entry name" value="cNMP"/>
    <property type="match status" value="1"/>
</dbReference>
<dbReference type="SUPFAM" id="SSF51206">
    <property type="entry name" value="cAMP-binding domain-like"/>
    <property type="match status" value="2"/>
</dbReference>
<dbReference type="SUPFAM" id="SSF52151">
    <property type="entry name" value="FabD/lysophospholipase-like"/>
    <property type="match status" value="1"/>
</dbReference>
<dbReference type="PROSITE" id="PS50042">
    <property type="entry name" value="CNMP_BINDING_3"/>
    <property type="match status" value="2"/>
</dbReference>
<dbReference type="PROSITE" id="PS51635">
    <property type="entry name" value="PNPLA"/>
    <property type="match status" value="1"/>
</dbReference>
<comment type="function">
    <text evidence="1">Intracellular phospholipase B that catalyzes the double deacylation of phosphatidylcholine (PC) to glycerophosphocholine (GroPCho). Plays an important role in membrane lipid homeostasis. Responsible for the rapid PC turnover in response to inositol, elevated temperatures, or when choline is present in the growth medium (By similarity).</text>
</comment>
<comment type="catalytic activity">
    <reaction>
        <text>a 1-acyl-sn-glycero-3-phosphocholine + H2O = sn-glycerol 3-phosphocholine + a fatty acid + H(+)</text>
        <dbReference type="Rhea" id="RHEA:15177"/>
        <dbReference type="ChEBI" id="CHEBI:15377"/>
        <dbReference type="ChEBI" id="CHEBI:15378"/>
        <dbReference type="ChEBI" id="CHEBI:16870"/>
        <dbReference type="ChEBI" id="CHEBI:28868"/>
        <dbReference type="ChEBI" id="CHEBI:58168"/>
        <dbReference type="EC" id="3.1.1.5"/>
    </reaction>
</comment>
<comment type="activity regulation">
    <text evidence="1">Inhibited by organophosphorus esters.</text>
</comment>
<comment type="subcellular location">
    <subcellularLocation>
        <location evidence="1">Endoplasmic reticulum membrane</location>
        <topology evidence="1">Multi-pass membrane protein</topology>
    </subcellularLocation>
</comment>
<comment type="similarity">
    <text evidence="5">Belongs to the NTE family.</text>
</comment>
<organism>
    <name type="scientific">Candida albicans (strain SC5314 / ATCC MYA-2876)</name>
    <name type="common">Yeast</name>
    <dbReference type="NCBI Taxonomy" id="237561"/>
    <lineage>
        <taxon>Eukaryota</taxon>
        <taxon>Fungi</taxon>
        <taxon>Dikarya</taxon>
        <taxon>Ascomycota</taxon>
        <taxon>Saccharomycotina</taxon>
        <taxon>Pichiomycetes</taxon>
        <taxon>Debaryomycetaceae</taxon>
        <taxon>Candida/Lodderomyces clade</taxon>
        <taxon>Candida</taxon>
    </lineage>
</organism>